<protein>
    <recommendedName>
        <fullName>Paladin</fullName>
    </recommendedName>
</protein>
<evidence type="ECO:0000250" key="1"/>
<evidence type="ECO:0000255" key="2"/>
<evidence type="ECO:0000256" key="3">
    <source>
        <dbReference type="SAM" id="MobiDB-lite"/>
    </source>
</evidence>
<evidence type="ECO:0000305" key="4"/>
<gene>
    <name type="primary">pald1</name>
    <name type="synonym">pald</name>
</gene>
<organism>
    <name type="scientific">Danio rerio</name>
    <name type="common">Zebrafish</name>
    <name type="synonym">Brachydanio rerio</name>
    <dbReference type="NCBI Taxonomy" id="7955"/>
    <lineage>
        <taxon>Eukaryota</taxon>
        <taxon>Metazoa</taxon>
        <taxon>Chordata</taxon>
        <taxon>Craniata</taxon>
        <taxon>Vertebrata</taxon>
        <taxon>Euteleostomi</taxon>
        <taxon>Actinopterygii</taxon>
        <taxon>Neopterygii</taxon>
        <taxon>Teleostei</taxon>
        <taxon>Ostariophysi</taxon>
        <taxon>Cypriniformes</taxon>
        <taxon>Danionidae</taxon>
        <taxon>Danioninae</taxon>
        <taxon>Danio</taxon>
    </lineage>
</organism>
<sequence length="860" mass="98885">MGTTASAAPQATLHERLHSDSMTDSRRSIQTLGIHNNKAKSIITNKVAPVVITYNCRQEFQIHDDVLRTNYKVGRISDNMPEHHLVQGSFFMVQDVFSKADVLNTTASYGAPNFRQSGGGFPLYGMGQTSLGGFKRVLESLQTRGHQEVIFFCLREEPVVFLHLQEDFLPYTPRRKENLHENLQHLQRGASSEDLELTIRKELHDFAKLNDNMFYVYNDIEHLKGEPQKICICSEEDIHITEEVYRRPRFTMPAYRYYRLPLPMEGAPMEEQFDAFVKVLRENPSLSLNRDASRLLPALLFSCQVGVGRTNLGLILGTLVMMHLTRTTAEKTTPAEEEVKDEHKIQFRVIESLIGKLPKGQEVMEEVNRAIDLCSEMHDIRESIYENKQKLEGIGEDYQTQGSSTKDYFLHGALQSLERYFYLIVFNAYLHEQYPLAFACSFSQWLCSNAWIYRLLSCMNQSELRAPADLVTKGARVLVADEYLAPDVLSTIKEMKVANFRRVPKMSIYGMAQPTSEAASVVLAYLCDEKRKHSSVLWVNLQDELLLEANNQIFSPREPTRVEQCIRVCSAQPEDIQSLEASLKAQLLASQQWLEVTLEQEKQMKMIKSCSTVQEIFNQLKSSHHALQYRRIPFPECSAPSEEGFDQLLDVMKATLAEDSLSAFVFNCSNGKARTTTAMVIATLTLWHFNGFPEFCEDEIVSVPDAKYTKGEFEVVMKLVRLLPDGQRMKREVDAALDSVSETMTPLHYHLREIIICTYRQIRSCKSDAELLALQALLYLERYIYLILYNSYLHLEKRDSWRRPFSVWMQQVAAPAGVYELLNQLGFSEFEDLRDSTLCRLRRRWLQQNRHGLPFRGELI</sequence>
<accession>Q803E0</accession>
<accession>Q6NY33</accession>
<reference key="1">
    <citation type="submission" date="2004-03" db="EMBL/GenBank/DDBJ databases">
        <authorList>
            <consortium name="NIH - Zebrafish Gene Collection (ZGC) project"/>
        </authorList>
    </citation>
    <scope>NUCLEOTIDE SEQUENCE [LARGE SCALE MRNA]</scope>
    <source>
        <strain>AB</strain>
        <tissue>Kidney</tissue>
    </source>
</reference>
<feature type="initiator methionine" description="Removed" evidence="2">
    <location>
        <position position="1"/>
    </location>
</feature>
<feature type="chain" id="PRO_0000286133" description="Paladin">
    <location>
        <begin position="2"/>
        <end position="860"/>
    </location>
</feature>
<feature type="region of interest" description="Disordered" evidence="3">
    <location>
        <begin position="1"/>
        <end position="24"/>
    </location>
</feature>
<feature type="compositionally biased region" description="Basic and acidic residues" evidence="3">
    <location>
        <begin position="13"/>
        <end position="24"/>
    </location>
</feature>
<feature type="lipid moiety-binding region" description="N-myristoyl glycine" evidence="2">
    <location>
        <position position="2"/>
    </location>
</feature>
<feature type="sequence conflict" description="In Ref. 1; AAH66756." evidence="4" ref="1">
    <original>H</original>
    <variation>Y</variation>
    <location>
        <position position="222"/>
    </location>
</feature>
<feature type="sequence conflict" description="In Ref. 1; AAH66756." evidence="4" ref="1">
    <original>L</original>
    <variation>P</variation>
    <location>
        <position position="295"/>
    </location>
</feature>
<feature type="sequence conflict" description="In Ref. 1; AAH66756." evidence="4" ref="1">
    <original>A</original>
    <variation>V</variation>
    <location>
        <position position="654"/>
    </location>
</feature>
<feature type="sequence conflict" description="In Ref. 1; AAH66756." evidence="4" ref="1">
    <original>L</original>
    <variation>H</variation>
    <location>
        <position position="821"/>
    </location>
</feature>
<keyword id="KW-0963">Cytoplasm</keyword>
<keyword id="KW-0449">Lipoprotein</keyword>
<keyword id="KW-0519">Myristate</keyword>
<keyword id="KW-1185">Reference proteome</keyword>
<dbReference type="EMBL" id="BC044521">
    <property type="protein sequence ID" value="AAH44521.1"/>
    <property type="molecule type" value="mRNA"/>
</dbReference>
<dbReference type="EMBL" id="BC066756">
    <property type="protein sequence ID" value="AAH66756.1"/>
    <property type="molecule type" value="mRNA"/>
</dbReference>
<dbReference type="RefSeq" id="NP_942106.1">
    <property type="nucleotide sequence ID" value="NM_198811.1"/>
</dbReference>
<dbReference type="FunCoup" id="Q803E0">
    <property type="interactions" value="235"/>
</dbReference>
<dbReference type="STRING" id="7955.ENSDARP00000149853"/>
<dbReference type="GeneID" id="368369"/>
<dbReference type="KEGG" id="dre:368369"/>
<dbReference type="AGR" id="ZFIN:ZDB-GENE-030804-26"/>
<dbReference type="CTD" id="368369"/>
<dbReference type="ZFIN" id="ZDB-GENE-030804-26">
    <property type="gene designation" value="pald1a"/>
</dbReference>
<dbReference type="InParanoid" id="Q803E0"/>
<dbReference type="OrthoDB" id="66369at2759"/>
<dbReference type="PhylomeDB" id="Q803E0"/>
<dbReference type="PRO" id="PR:Q803E0"/>
<dbReference type="Proteomes" id="UP000000437">
    <property type="component" value="Chromosome 12"/>
</dbReference>
<dbReference type="GO" id="GO:0005737">
    <property type="term" value="C:cytoplasm"/>
    <property type="evidence" value="ECO:0000318"/>
    <property type="project" value="GO_Central"/>
</dbReference>
<dbReference type="GO" id="GO:0005829">
    <property type="term" value="C:cytosol"/>
    <property type="evidence" value="ECO:0007669"/>
    <property type="project" value="UniProtKB-SubCell"/>
</dbReference>
<dbReference type="GO" id="GO:0005634">
    <property type="term" value="C:nucleus"/>
    <property type="evidence" value="ECO:0000318"/>
    <property type="project" value="GO_Central"/>
</dbReference>
<dbReference type="GO" id="GO:0004725">
    <property type="term" value="F:protein tyrosine phosphatase activity"/>
    <property type="evidence" value="ECO:0000318"/>
    <property type="project" value="GO_Central"/>
</dbReference>
<dbReference type="GO" id="GO:0001525">
    <property type="term" value="P:angiogenesis"/>
    <property type="evidence" value="ECO:0000315"/>
    <property type="project" value="ZFIN"/>
</dbReference>
<dbReference type="CDD" id="cd17659">
    <property type="entry name" value="PTP_paladin_1"/>
    <property type="match status" value="1"/>
</dbReference>
<dbReference type="CDD" id="cd17660">
    <property type="entry name" value="PTP_paladin_2"/>
    <property type="match status" value="1"/>
</dbReference>
<dbReference type="FunFam" id="3.90.190.10:FF:000100">
    <property type="entry name" value="Phosphatase domain-containing paladin 1b"/>
    <property type="match status" value="1"/>
</dbReference>
<dbReference type="Gene3D" id="3.90.190.10">
    <property type="entry name" value="Protein tyrosine phosphatase superfamily"/>
    <property type="match status" value="2"/>
</dbReference>
<dbReference type="InterPro" id="IPR029021">
    <property type="entry name" value="Prot-tyrosine_phosphatase-like"/>
</dbReference>
<dbReference type="InterPro" id="IPR050561">
    <property type="entry name" value="PTP"/>
</dbReference>
<dbReference type="PANTHER" id="PTHR23339">
    <property type="entry name" value="TYROSINE SPECIFIC PROTEIN PHOSPHATASE AND DUAL SPECIFICITY PROTEIN PHOSPHATASE"/>
    <property type="match status" value="1"/>
</dbReference>
<dbReference type="Pfam" id="PF14566">
    <property type="entry name" value="PTPlike_phytase"/>
    <property type="match status" value="2"/>
</dbReference>
<dbReference type="SMART" id="SM01301">
    <property type="entry name" value="PTPlike_phytase"/>
    <property type="match status" value="2"/>
</dbReference>
<dbReference type="SUPFAM" id="SSF52799">
    <property type="entry name" value="(Phosphotyrosine protein) phosphatases II"/>
    <property type="match status" value="2"/>
</dbReference>
<name>PALD_DANRE</name>
<proteinExistence type="evidence at transcript level"/>
<comment type="subcellular location">
    <subcellularLocation>
        <location evidence="1">Cytoplasm</location>
        <location evidence="1">Cytosol</location>
    </subcellularLocation>
</comment>
<comment type="similarity">
    <text evidence="4">Belongs to the paladin family.</text>
</comment>